<keyword id="KW-0066">ATP synthesis</keyword>
<keyword id="KW-0375">Hydrogen ion transport</keyword>
<keyword id="KW-0406">Ion transport</keyword>
<keyword id="KW-0813">Transport</keyword>
<accession>A2RC98</accession>
<proteinExistence type="inferred from homology"/>
<name>VATB_STRPG</name>
<reference key="1">
    <citation type="journal article" date="2007" name="J. Bacteriol.">
        <title>Complete genome of acute rheumatic fever-associated serotype M5 Streptococcus pyogenes strain Manfredo.</title>
        <authorList>
            <person name="Holden M.T.G."/>
            <person name="Scott A."/>
            <person name="Cherevach I."/>
            <person name="Chillingworth T."/>
            <person name="Churcher C."/>
            <person name="Cronin A."/>
            <person name="Dowd L."/>
            <person name="Feltwell T."/>
            <person name="Hamlin N."/>
            <person name="Holroyd S."/>
            <person name="Jagels K."/>
            <person name="Moule S."/>
            <person name="Mungall K."/>
            <person name="Quail M.A."/>
            <person name="Price C."/>
            <person name="Rabbinowitsch E."/>
            <person name="Sharp S."/>
            <person name="Skelton J."/>
            <person name="Whitehead S."/>
            <person name="Barrell B.G."/>
            <person name="Kehoe M."/>
            <person name="Parkhill J."/>
        </authorList>
    </citation>
    <scope>NUCLEOTIDE SEQUENCE [LARGE SCALE GENOMIC DNA]</scope>
    <source>
        <strain>Manfredo</strain>
    </source>
</reference>
<protein>
    <recommendedName>
        <fullName evidence="1">V-type ATP synthase beta chain</fullName>
    </recommendedName>
    <alternativeName>
        <fullName evidence="1">V-ATPase subunit B</fullName>
    </alternativeName>
</protein>
<organism>
    <name type="scientific">Streptococcus pyogenes serotype M5 (strain Manfredo)</name>
    <dbReference type="NCBI Taxonomy" id="160491"/>
    <lineage>
        <taxon>Bacteria</taxon>
        <taxon>Bacillati</taxon>
        <taxon>Bacillota</taxon>
        <taxon>Bacilli</taxon>
        <taxon>Lactobacillales</taxon>
        <taxon>Streptococcaceae</taxon>
        <taxon>Streptococcus</taxon>
    </lineage>
</organism>
<comment type="function">
    <text evidence="1">Produces ATP from ADP in the presence of a proton gradient across the membrane. The V-type beta chain is a regulatory subunit.</text>
</comment>
<comment type="similarity">
    <text evidence="1">Belongs to the ATPase alpha/beta chains family.</text>
</comment>
<feature type="chain" id="PRO_1000059394" description="V-type ATP synthase beta chain">
    <location>
        <begin position="1"/>
        <end position="471"/>
    </location>
</feature>
<evidence type="ECO:0000255" key="1">
    <source>
        <dbReference type="HAMAP-Rule" id="MF_00310"/>
    </source>
</evidence>
<sequence length="471" mass="52358">MSVLKEYRTVSEVVGPLMIVDQVAGVHYNELVDITLHNGERRKGQVLEVQGDKAMVQLFEGSTGINLAKTKVRFTGHPLELAVSEDMVGRIFDGMGQPIDGGPELIPEKYLDIDGQAINPVARDYPDEFIQTGISAIDHLNTLVRGQKLPVFSGSGLPHNELAAQIARQATVLNSDDNFAVVFAAMGITFEEAEFFMNDLRETGAIDRSVLFINLANDPAIERIATPRIALTTAEYLAYEKGMHVLVIMTDMTNYCEALREVSAARREVPGRRGYPGYLYTNLSTLYERAGRLIGKKGSVTQIPILTMPEDDITHPIPDLTGYITEGQIILSQELYKNGFRPPINVLPSLSRLKDKGSGEGKTRQDHAATMNQLFAAYAQGKQAKELAVVLGESALSETDKLYVAFTNRFEEEYINQGFYTNRSIEESLDLGWELLSILPRTELKRIKDDMLDRYLPKADTTMTKVFVAND</sequence>
<gene>
    <name evidence="1" type="primary">atpB</name>
    <name type="ordered locus">SpyM50127</name>
</gene>
<dbReference type="EMBL" id="AM295007">
    <property type="protein sequence ID" value="CAM29470.1"/>
    <property type="molecule type" value="Genomic_DNA"/>
</dbReference>
<dbReference type="RefSeq" id="WP_002986419.1">
    <property type="nucleotide sequence ID" value="NC_009332.1"/>
</dbReference>
<dbReference type="SMR" id="A2RC98"/>
<dbReference type="KEGG" id="spf:SpyM50127"/>
<dbReference type="HOGENOM" id="CLU_022916_0_0_9"/>
<dbReference type="GO" id="GO:0005524">
    <property type="term" value="F:ATP binding"/>
    <property type="evidence" value="ECO:0007669"/>
    <property type="project" value="UniProtKB-UniRule"/>
</dbReference>
<dbReference type="GO" id="GO:0046933">
    <property type="term" value="F:proton-transporting ATP synthase activity, rotational mechanism"/>
    <property type="evidence" value="ECO:0007669"/>
    <property type="project" value="UniProtKB-UniRule"/>
</dbReference>
<dbReference type="GO" id="GO:0042777">
    <property type="term" value="P:proton motive force-driven plasma membrane ATP synthesis"/>
    <property type="evidence" value="ECO:0007669"/>
    <property type="project" value="UniProtKB-UniRule"/>
</dbReference>
<dbReference type="CDD" id="cd18112">
    <property type="entry name" value="ATP-synt_V_A-type_beta_C"/>
    <property type="match status" value="1"/>
</dbReference>
<dbReference type="CDD" id="cd18118">
    <property type="entry name" value="ATP-synt_V_A-type_beta_N"/>
    <property type="match status" value="1"/>
</dbReference>
<dbReference type="CDD" id="cd01135">
    <property type="entry name" value="V_A-ATPase_B"/>
    <property type="match status" value="1"/>
</dbReference>
<dbReference type="Gene3D" id="3.40.50.12240">
    <property type="match status" value="1"/>
</dbReference>
<dbReference type="HAMAP" id="MF_00310">
    <property type="entry name" value="ATP_synth_B_arch"/>
    <property type="match status" value="1"/>
</dbReference>
<dbReference type="InterPro" id="IPR055190">
    <property type="entry name" value="ATP-synt_VA_C"/>
</dbReference>
<dbReference type="InterPro" id="IPR020003">
    <property type="entry name" value="ATPase_a/bsu_AS"/>
</dbReference>
<dbReference type="InterPro" id="IPR004100">
    <property type="entry name" value="ATPase_F1/V1/A1_a/bsu_N"/>
</dbReference>
<dbReference type="InterPro" id="IPR000194">
    <property type="entry name" value="ATPase_F1/V1/A1_a/bsu_nucl-bd"/>
</dbReference>
<dbReference type="InterPro" id="IPR027417">
    <property type="entry name" value="P-loop_NTPase"/>
</dbReference>
<dbReference type="InterPro" id="IPR022879">
    <property type="entry name" value="V-ATPase_su_B/beta"/>
</dbReference>
<dbReference type="NCBIfam" id="NF003235">
    <property type="entry name" value="PRK04196.1"/>
    <property type="match status" value="1"/>
</dbReference>
<dbReference type="PANTHER" id="PTHR43389">
    <property type="entry name" value="V-TYPE PROTON ATPASE SUBUNIT B"/>
    <property type="match status" value="1"/>
</dbReference>
<dbReference type="PANTHER" id="PTHR43389:SF4">
    <property type="entry name" value="V-TYPE PROTON ATPASE SUBUNIT B"/>
    <property type="match status" value="1"/>
</dbReference>
<dbReference type="Pfam" id="PF00006">
    <property type="entry name" value="ATP-synt_ab"/>
    <property type="match status" value="1"/>
</dbReference>
<dbReference type="Pfam" id="PF02874">
    <property type="entry name" value="ATP-synt_ab_N"/>
    <property type="match status" value="1"/>
</dbReference>
<dbReference type="Pfam" id="PF22919">
    <property type="entry name" value="ATP-synt_VA_C"/>
    <property type="match status" value="1"/>
</dbReference>
<dbReference type="PIRSF" id="PIRSF039114">
    <property type="entry name" value="V-ATPsynth_beta/V-ATPase_B"/>
    <property type="match status" value="1"/>
</dbReference>
<dbReference type="SUPFAM" id="SSF47917">
    <property type="entry name" value="C-terminal domain of alpha and beta subunits of F1 ATP synthase"/>
    <property type="match status" value="1"/>
</dbReference>
<dbReference type="SUPFAM" id="SSF52540">
    <property type="entry name" value="P-loop containing nucleoside triphosphate hydrolases"/>
    <property type="match status" value="1"/>
</dbReference>
<dbReference type="PROSITE" id="PS00152">
    <property type="entry name" value="ATPASE_ALPHA_BETA"/>
    <property type="match status" value="1"/>
</dbReference>